<accession>B2Y206</accession>
<reference key="1">
    <citation type="journal article" date="2008" name="BMC Evol. Biol.">
        <title>The complete plastid genome sequence of Welwitschia mirabilis: an unusually compact plastome with accelerated divergence rates.</title>
        <authorList>
            <person name="McCoy S.R."/>
            <person name="Kuehl J.V."/>
            <person name="Boore J.L."/>
            <person name="Raubeson L.A."/>
        </authorList>
    </citation>
    <scope>NUCLEOTIDE SEQUENCE [LARGE SCALE GENOMIC DNA]</scope>
</reference>
<reference key="2">
    <citation type="journal article" date="2009" name="Mol. Phylogenet. Evol.">
        <title>Evolution of reduced and compact chloroplast genomes (cpDNAs) in gnetophytes: Selection toward a lower-cost strategy.</title>
        <authorList>
            <person name="Wu C.-S."/>
            <person name="Lai Y.-T."/>
            <person name="Lin C.-P."/>
            <person name="Wang Y.-N."/>
            <person name="Chaw S.-M."/>
        </authorList>
    </citation>
    <scope>NUCLEOTIDE SEQUENCE [LARGE SCALE GENOMIC DNA]</scope>
</reference>
<comment type="function">
    <text evidence="1">Required during biogenesis of c-type cytochromes (cytochrome c6 and cytochrome f) at the step of heme attachment.</text>
</comment>
<comment type="subunit">
    <text evidence="1">May interact with Ccs1.</text>
</comment>
<comment type="subcellular location">
    <subcellularLocation>
        <location evidence="1">Plastid</location>
        <location evidence="1">Chloroplast thylakoid membrane</location>
        <topology evidence="1">Multi-pass membrane protein</topology>
    </subcellularLocation>
</comment>
<comment type="similarity">
    <text evidence="1">Belongs to the CcmF/CycK/Ccl1/NrfE/CcsA family.</text>
</comment>
<feature type="chain" id="PRO_1000184270" description="Cytochrome c biogenesis protein CcsA">
    <location>
        <begin position="1"/>
        <end position="305"/>
    </location>
</feature>
<feature type="transmembrane region" description="Helical" evidence="1">
    <location>
        <begin position="13"/>
        <end position="33"/>
    </location>
</feature>
<feature type="transmembrane region" description="Helical" evidence="1">
    <location>
        <begin position="42"/>
        <end position="62"/>
    </location>
</feature>
<feature type="transmembrane region" description="Helical" evidence="1">
    <location>
        <begin position="70"/>
        <end position="90"/>
    </location>
</feature>
<feature type="transmembrane region" description="Helical" evidence="1">
    <location>
        <begin position="97"/>
        <end position="117"/>
    </location>
</feature>
<feature type="transmembrane region" description="Helical" evidence="1">
    <location>
        <begin position="135"/>
        <end position="155"/>
    </location>
</feature>
<feature type="transmembrane region" description="Helical" evidence="1">
    <location>
        <begin position="212"/>
        <end position="232"/>
    </location>
</feature>
<feature type="transmembrane region" description="Helical" evidence="1">
    <location>
        <begin position="242"/>
        <end position="262"/>
    </location>
</feature>
<feature type="transmembrane region" description="Helical" evidence="1">
    <location>
        <begin position="276"/>
        <end position="296"/>
    </location>
</feature>
<name>CCSA_WELMI</name>
<keyword id="KW-0150">Chloroplast</keyword>
<keyword id="KW-0201">Cytochrome c-type biogenesis</keyword>
<keyword id="KW-0472">Membrane</keyword>
<keyword id="KW-0934">Plastid</keyword>
<keyword id="KW-0793">Thylakoid</keyword>
<keyword id="KW-0812">Transmembrane</keyword>
<keyword id="KW-1133">Transmembrane helix</keyword>
<sequence length="305" mass="35543">MILITLEHILTQIYFSFILVITLVFGGTLVYPVNKLSNSVKKGIIFPFFCITLNLIIRWFYSRHLPLSNLYESLMFFSWNFCLIPFFIDIKNPNTQWIGVITAPSALFTHAFATLILPIEMQQSQRLIPALQSHWLIMHVTIIFLGYVTLLCGSLSSIALLAINLEKKLSFFTLYFRKEYSYENKRKAFHPYSFKNFRKSQMIHQIDNLSYYTIVIGFTFLTIGILSGAVWANEAWGSYWSWDPKEIWALITWLIFANYIHIRLNKGWEGNKPALVASLGLFFVWICYFGVNILGIGFHSYGWFL</sequence>
<evidence type="ECO:0000255" key="1">
    <source>
        <dbReference type="HAMAP-Rule" id="MF_01391"/>
    </source>
</evidence>
<protein>
    <recommendedName>
        <fullName evidence="1">Cytochrome c biogenesis protein CcsA</fullName>
    </recommendedName>
</protein>
<geneLocation type="chloroplast"/>
<proteinExistence type="inferred from homology"/>
<dbReference type="EMBL" id="EU342371">
    <property type="protein sequence ID" value="ABY26836.1"/>
    <property type="molecule type" value="Genomic_DNA"/>
</dbReference>
<dbReference type="EMBL" id="AP009568">
    <property type="protein sequence ID" value="BAH11182.1"/>
    <property type="molecule type" value="Genomic_DNA"/>
</dbReference>
<dbReference type="RefSeq" id="YP_001876623.1">
    <property type="nucleotide sequence ID" value="NC_010654.1"/>
</dbReference>
<dbReference type="SMR" id="B2Y206"/>
<dbReference type="GeneID" id="6276194"/>
<dbReference type="GO" id="GO:0009535">
    <property type="term" value="C:chloroplast thylakoid membrane"/>
    <property type="evidence" value="ECO:0007669"/>
    <property type="project" value="UniProtKB-SubCell"/>
</dbReference>
<dbReference type="GO" id="GO:0005886">
    <property type="term" value="C:plasma membrane"/>
    <property type="evidence" value="ECO:0007669"/>
    <property type="project" value="TreeGrafter"/>
</dbReference>
<dbReference type="GO" id="GO:0020037">
    <property type="term" value="F:heme binding"/>
    <property type="evidence" value="ECO:0007669"/>
    <property type="project" value="InterPro"/>
</dbReference>
<dbReference type="GO" id="GO:0017004">
    <property type="term" value="P:cytochrome complex assembly"/>
    <property type="evidence" value="ECO:0007669"/>
    <property type="project" value="UniProtKB-UniRule"/>
</dbReference>
<dbReference type="HAMAP" id="MF_01391">
    <property type="entry name" value="CytC_CcsA"/>
    <property type="match status" value="1"/>
</dbReference>
<dbReference type="InterPro" id="IPR002541">
    <property type="entry name" value="Cyt_c_assembly"/>
</dbReference>
<dbReference type="InterPro" id="IPR017562">
    <property type="entry name" value="Cyt_c_biogenesis_CcsA"/>
</dbReference>
<dbReference type="InterPro" id="IPR045062">
    <property type="entry name" value="Cyt_c_biogenesis_CcsA/CcmC"/>
</dbReference>
<dbReference type="NCBIfam" id="TIGR03144">
    <property type="entry name" value="cytochr_II_ccsB"/>
    <property type="match status" value="1"/>
</dbReference>
<dbReference type="PANTHER" id="PTHR30071:SF1">
    <property type="entry name" value="CYTOCHROME B_B6 PROTEIN-RELATED"/>
    <property type="match status" value="1"/>
</dbReference>
<dbReference type="PANTHER" id="PTHR30071">
    <property type="entry name" value="HEME EXPORTER PROTEIN C"/>
    <property type="match status" value="1"/>
</dbReference>
<dbReference type="Pfam" id="PF01578">
    <property type="entry name" value="Cytochrom_C_asm"/>
    <property type="match status" value="1"/>
</dbReference>
<gene>
    <name evidence="1" type="primary">ccsA</name>
</gene>
<organism>
    <name type="scientific">Welwitschia mirabilis</name>
    <name type="common">Tree tumbo</name>
    <name type="synonym">Welwitschia bainesii</name>
    <dbReference type="NCBI Taxonomy" id="3377"/>
    <lineage>
        <taxon>Eukaryota</taxon>
        <taxon>Viridiplantae</taxon>
        <taxon>Streptophyta</taxon>
        <taxon>Embryophyta</taxon>
        <taxon>Tracheophyta</taxon>
        <taxon>Spermatophyta</taxon>
        <taxon>Gnetopsida</taxon>
        <taxon>Gnetidae</taxon>
        <taxon>Welwitschiales</taxon>
        <taxon>Welwitschiaceae</taxon>
        <taxon>Welwitschia</taxon>
    </lineage>
</organism>